<reference key="1">
    <citation type="journal article" date="1995" name="Science">
        <title>Whole-genome random sequencing and assembly of Haemophilus influenzae Rd.</title>
        <authorList>
            <person name="Fleischmann R.D."/>
            <person name="Adams M.D."/>
            <person name="White O."/>
            <person name="Clayton R.A."/>
            <person name="Kirkness E.F."/>
            <person name="Kerlavage A.R."/>
            <person name="Bult C.J."/>
            <person name="Tomb J.-F."/>
            <person name="Dougherty B.A."/>
            <person name="Merrick J.M."/>
            <person name="McKenney K."/>
            <person name="Sutton G.G."/>
            <person name="FitzHugh W."/>
            <person name="Fields C.A."/>
            <person name="Gocayne J.D."/>
            <person name="Scott J.D."/>
            <person name="Shirley R."/>
            <person name="Liu L.-I."/>
            <person name="Glodek A."/>
            <person name="Kelley J.M."/>
            <person name="Weidman J.F."/>
            <person name="Phillips C.A."/>
            <person name="Spriggs T."/>
            <person name="Hedblom E."/>
            <person name="Cotton M.D."/>
            <person name="Utterback T.R."/>
            <person name="Hanna M.C."/>
            <person name="Nguyen D.T."/>
            <person name="Saudek D.M."/>
            <person name="Brandon R.C."/>
            <person name="Fine L.D."/>
            <person name="Fritchman J.L."/>
            <person name="Fuhrmann J.L."/>
            <person name="Geoghagen N.S.M."/>
            <person name="Gnehm C.L."/>
            <person name="McDonald L.A."/>
            <person name="Small K.V."/>
            <person name="Fraser C.M."/>
            <person name="Smith H.O."/>
            <person name="Venter J.C."/>
        </authorList>
    </citation>
    <scope>NUCLEOTIDE SEQUENCE [LARGE SCALE GENOMIC DNA]</scope>
    <source>
        <strain>ATCC 51907 / DSM 11121 / KW20 / Rd</strain>
    </source>
</reference>
<name>LPXM_HAEIN</name>
<organism>
    <name type="scientific">Haemophilus influenzae (strain ATCC 51907 / DSM 11121 / KW20 / Rd)</name>
    <dbReference type="NCBI Taxonomy" id="71421"/>
    <lineage>
        <taxon>Bacteria</taxon>
        <taxon>Pseudomonadati</taxon>
        <taxon>Pseudomonadota</taxon>
        <taxon>Gammaproteobacteria</taxon>
        <taxon>Pasteurellales</taxon>
        <taxon>Pasteurellaceae</taxon>
        <taxon>Haemophilus</taxon>
    </lineage>
</organism>
<feature type="chain" id="PRO_0000201778" description="Lipid A biosynthesis acyltransferase">
    <location>
        <begin position="1"/>
        <end position="318"/>
    </location>
</feature>
<feature type="transmembrane region" description="Helical" evidence="1">
    <location>
        <begin position="27"/>
        <end position="47"/>
    </location>
</feature>
<feature type="short sequence motif" description="HXXXXD motif" evidence="1">
    <location>
        <begin position="145"/>
        <end position="150"/>
    </location>
</feature>
<dbReference type="EC" id="2.3.1.243" evidence="1"/>
<dbReference type="EMBL" id="L42023">
    <property type="protein sequence ID" value="AAC21868.1"/>
    <property type="molecule type" value="Genomic_DNA"/>
</dbReference>
<dbReference type="PIR" id="I64053">
    <property type="entry name" value="I64053"/>
</dbReference>
<dbReference type="RefSeq" id="NP_438368.1">
    <property type="nucleotide sequence ID" value="NC_000907.1"/>
</dbReference>
<dbReference type="SMR" id="P44567"/>
<dbReference type="STRING" id="71421.HI_0199"/>
<dbReference type="EnsemblBacteria" id="AAC21868">
    <property type="protein sequence ID" value="AAC21868"/>
    <property type="gene ID" value="HI_0199"/>
</dbReference>
<dbReference type="KEGG" id="hin:HI_0199"/>
<dbReference type="PATRIC" id="fig|71421.8.peg.204"/>
<dbReference type="eggNOG" id="COG1560">
    <property type="taxonomic scope" value="Bacteria"/>
</dbReference>
<dbReference type="HOGENOM" id="CLU_049421_1_0_6"/>
<dbReference type="OrthoDB" id="9803456at2"/>
<dbReference type="PhylomeDB" id="P44567"/>
<dbReference type="BioCyc" id="HINF71421:G1GJ1-210-MONOMER"/>
<dbReference type="UniPathway" id="UPA00030"/>
<dbReference type="UniPathway" id="UPA00360">
    <property type="reaction ID" value="UER00486"/>
</dbReference>
<dbReference type="Proteomes" id="UP000000579">
    <property type="component" value="Chromosome"/>
</dbReference>
<dbReference type="GO" id="GO:0009276">
    <property type="term" value="C:Gram-negative-bacterium-type cell wall"/>
    <property type="evidence" value="ECO:0007669"/>
    <property type="project" value="InterPro"/>
</dbReference>
<dbReference type="GO" id="GO:0016020">
    <property type="term" value="C:membrane"/>
    <property type="evidence" value="ECO:0000318"/>
    <property type="project" value="GO_Central"/>
</dbReference>
<dbReference type="GO" id="GO:0005886">
    <property type="term" value="C:plasma membrane"/>
    <property type="evidence" value="ECO:0007669"/>
    <property type="project" value="UniProtKB-SubCell"/>
</dbReference>
<dbReference type="GO" id="GO:0016746">
    <property type="term" value="F:acyltransferase activity"/>
    <property type="evidence" value="ECO:0000318"/>
    <property type="project" value="GO_Central"/>
</dbReference>
<dbReference type="GO" id="GO:0016747">
    <property type="term" value="F:acyltransferase activity, transferring groups other than amino-acyl groups"/>
    <property type="evidence" value="ECO:0007669"/>
    <property type="project" value="InterPro"/>
</dbReference>
<dbReference type="GO" id="GO:0009247">
    <property type="term" value="P:glycolipid biosynthetic process"/>
    <property type="evidence" value="ECO:0000318"/>
    <property type="project" value="GO_Central"/>
</dbReference>
<dbReference type="GO" id="GO:0036104">
    <property type="term" value="P:Kdo2-lipid A biosynthetic process"/>
    <property type="evidence" value="ECO:0007669"/>
    <property type="project" value="UniProtKB-UniRule"/>
</dbReference>
<dbReference type="GO" id="GO:0009103">
    <property type="term" value="P:lipopolysaccharide biosynthetic process"/>
    <property type="evidence" value="ECO:0007669"/>
    <property type="project" value="UniProtKB-UniRule"/>
</dbReference>
<dbReference type="CDD" id="cd07984">
    <property type="entry name" value="LPLAT_LABLAT-like"/>
    <property type="match status" value="1"/>
</dbReference>
<dbReference type="HAMAP" id="MF_01944">
    <property type="entry name" value="Lipid_A_LpxM"/>
    <property type="match status" value="1"/>
</dbReference>
<dbReference type="InterPro" id="IPR004960">
    <property type="entry name" value="LipA_acyltrans"/>
</dbReference>
<dbReference type="InterPro" id="IPR011921">
    <property type="entry name" value="Lipid_A_MsbB"/>
</dbReference>
<dbReference type="NCBIfam" id="TIGR02208">
    <property type="entry name" value="lipid_A_msbB"/>
    <property type="match status" value="1"/>
</dbReference>
<dbReference type="NCBIfam" id="NF006507">
    <property type="entry name" value="PRK08943.1"/>
    <property type="match status" value="1"/>
</dbReference>
<dbReference type="PANTHER" id="PTHR30606">
    <property type="entry name" value="LIPID A BIOSYNTHESIS LAUROYL ACYLTRANSFERASE"/>
    <property type="match status" value="1"/>
</dbReference>
<dbReference type="PANTHER" id="PTHR30606:SF4">
    <property type="entry name" value="LIPID A BIOSYNTHESIS MYRISTOYLTRANSFERASE"/>
    <property type="match status" value="1"/>
</dbReference>
<dbReference type="Pfam" id="PF03279">
    <property type="entry name" value="Lip_A_acyltrans"/>
    <property type="match status" value="1"/>
</dbReference>
<dbReference type="PIRSF" id="PIRSF026649">
    <property type="entry name" value="MsbB"/>
    <property type="match status" value="1"/>
</dbReference>
<protein>
    <recommendedName>
        <fullName evidence="1">Lipid A biosynthesis acyltransferase</fullName>
        <ecNumber evidence="1">2.3.1.243</ecNumber>
    </recommendedName>
    <alternativeName>
        <fullName evidence="1">Kdo(2)-lauroyl-lipid IV(A) acyltransferase</fullName>
    </alternativeName>
</protein>
<gene>
    <name evidence="1" type="primary">lpxM</name>
    <name type="synonym">msbB</name>
    <name type="ordered locus">HI_0199</name>
</gene>
<sequence length="318" mass="36883">MSDNQQNLRLTARVGYEAHFSWSYLKPQYWGIWLGIFFLLLLAFVPFRLRDKLTGKLGIWIGHKAKKQRTRAQTNLQYCFPHWTEQQREQVIDKMFAVVAQVMFGIGEIAIRSKKHLQKRSEFIGLEHIEQAKAEGKNIILMVPHGWAIDASGIILHTQGMPMTSMYNPHRNPLVDWLWTITRQRFGGKMHARQNGIKPFLSHVRKGEMGYYLPDEDFGAEQSVFVDFFGTYKATLPGLNKMAKLSKAVVIPMFPRYNAETGKYEMEIHPAMNLSDDPEQSARAMNEEIESFVTPAPEQYVWILQLLRTRKDGEDLYD</sequence>
<comment type="function">
    <text evidence="1">Catalyzes the transfer of an acyl chain from an acyl-[acyl-carrier-protein] (ACP) to a Kdo(2)-(acyl)-lipid IV(A) to form a Kdo(2)-lipid A.</text>
</comment>
<comment type="catalytic activity">
    <reaction evidence="1">
        <text>an alpha-Kdo-(2-&gt;4)-alpha-Kdo-(2-&gt;6)-(acyl)-lipid IVA + a fatty acyl-[ACP] = an alpha-Kdo-(2-&gt;4)-alpha-Kdo-(2-&gt;6)-lipid A + holo-[ACP]</text>
        <dbReference type="Rhea" id="RHEA:69400"/>
        <dbReference type="Rhea" id="RHEA-COMP:9685"/>
        <dbReference type="Rhea" id="RHEA-COMP:14125"/>
        <dbReference type="ChEBI" id="CHEBI:64479"/>
        <dbReference type="ChEBI" id="CHEBI:138651"/>
        <dbReference type="ChEBI" id="CHEBI:176430"/>
        <dbReference type="ChEBI" id="CHEBI:176431"/>
        <dbReference type="EC" id="2.3.1.243"/>
    </reaction>
</comment>
<comment type="pathway">
    <text evidence="1">Glycolipid biosynthesis; KDO(2)-lipid A biosynthesis; KDO(2)-lipid A from CMP-3-deoxy-D-manno-octulosonate and lipid IV(A): step 4/4.</text>
</comment>
<comment type="pathway">
    <text evidence="1">Bacterial outer membrane biogenesis; lipopolysaccharide biosynthesis.</text>
</comment>
<comment type="subcellular location">
    <subcellularLocation>
        <location evidence="1">Cell inner membrane</location>
        <topology evidence="1">Single-pass membrane protein</topology>
    </subcellularLocation>
</comment>
<comment type="similarity">
    <text evidence="1">Belongs to the LpxL/LpxM/LpxP family. LpxM subfamily.</text>
</comment>
<evidence type="ECO:0000255" key="1">
    <source>
        <dbReference type="HAMAP-Rule" id="MF_01944"/>
    </source>
</evidence>
<accession>P44567</accession>
<proteinExistence type="inferred from homology"/>
<keyword id="KW-0012">Acyltransferase</keyword>
<keyword id="KW-0997">Cell inner membrane</keyword>
<keyword id="KW-1003">Cell membrane</keyword>
<keyword id="KW-0448">Lipopolysaccharide biosynthesis</keyword>
<keyword id="KW-0472">Membrane</keyword>
<keyword id="KW-1185">Reference proteome</keyword>
<keyword id="KW-0808">Transferase</keyword>
<keyword id="KW-0812">Transmembrane</keyword>
<keyword id="KW-1133">Transmembrane helix</keyword>